<organismHost>
    <name type="scientific">Homo sapiens</name>
    <name type="common">Human</name>
    <dbReference type="NCBI Taxonomy" id="9606"/>
</organismHost>
<protein>
    <recommendedName>
        <fullName evidence="1">Minor capsid protein L2</fullName>
    </recommendedName>
</protein>
<comment type="function">
    <text evidence="1">Minor protein of the capsid that localizes along the inner surface of the virion, within the central cavities beneath the L1 pentamers. Plays a role in capsid stabilization through interaction with the major capsid protein L1. Once the virion enters the host cell, L2 escorts the genomic DNA into the nucleus by promoting escape from the endosomal compartments and traffic through the host Golgi network. Mechanistically, the C-terminus of L2 possesses a cell-penetrating peptide that protudes from the host endosome, interacts with host cytoplasmic retromer cargo and thereby mediates the capsid delivery to the host trans-Golgi network. Plays a role through its interaction with host dynein in the intracellular microtubule-dependent transport of viral capsid toward the nucleus. Mediates the viral genome import into the nucleus through binding to host importins. Once within the nucleus, L2 localizes viral genomes to host PML bodies in order to activate early gene expression for establishment of infection. Later on, promotes late gene expression by interacting with the viral E2 protein and by inhibiting its transcriptional activation functions. During virion assembly, encapsidates the genome by direct interaction with the viral DNA.</text>
</comment>
<comment type="subunit">
    <text evidence="1">Interacts with major capsid protein L1. Interacts with E2; this interaction inhibits E2 transcriptional activity but not the DNA replication function E2. Interacts with host GADD45GIP1. Interacts with host HSPA8; this interaction is required for L2 nuclear translocation. Interacts with host importins KPNB2 and KPNB3. Forms a complex with importin alpha2-beta1 heterodimers via interaction with the importin alpha2 adapter. Interacts with host DYNLT1; this interaction is essential for virus intracellular transport during entry. Interacts (via C-terminus) with host retromer subunits VPS35 and VPS29.</text>
</comment>
<comment type="subcellular location">
    <subcellularLocation>
        <location evidence="1">Virion</location>
    </subcellularLocation>
    <subcellularLocation>
        <location evidence="1">Host nucleus</location>
    </subcellularLocation>
    <subcellularLocation>
        <location evidence="1">Host early endosome</location>
    </subcellularLocation>
    <subcellularLocation>
        <location evidence="1">Host Golgi apparatus</location>
    </subcellularLocation>
</comment>
<comment type="PTM">
    <text evidence="1">Highly phosphorylated.</text>
</comment>
<comment type="similarity">
    <text evidence="1">Belongs to the papillomaviridae L2 protein family.</text>
</comment>
<organism>
    <name type="scientific">Human papillomavirus 65</name>
    <dbReference type="NCBI Taxonomy" id="28312"/>
    <lineage>
        <taxon>Viruses</taxon>
        <taxon>Monodnaviria</taxon>
        <taxon>Shotokuvirae</taxon>
        <taxon>Cossaviricota</taxon>
        <taxon>Papovaviricetes</taxon>
        <taxon>Zurhausenvirales</taxon>
        <taxon>Papillomaviridae</taxon>
        <taxon>Firstpapillomavirinae</taxon>
        <taxon>Gammapapillomavirus</taxon>
        <taxon>Gammapapillomavirus 1</taxon>
    </lineage>
</organism>
<evidence type="ECO:0000255" key="1">
    <source>
        <dbReference type="HAMAP-Rule" id="MF_04003"/>
    </source>
</evidence>
<feature type="chain" id="PRO_0000133629" description="Minor capsid protein L2">
    <location>
        <begin position="1"/>
        <end position="518"/>
    </location>
</feature>
<feature type="short sequence motif" description="Nuclear localization signal" evidence="1">
    <location>
        <begin position="1"/>
        <end position="10"/>
    </location>
</feature>
<feature type="short sequence motif" description="Nuclear localization signal" evidence="1">
    <location>
        <begin position="509"/>
        <end position="515"/>
    </location>
</feature>
<feature type="disulfide bond" evidence="1">
    <location>
        <begin position="19"/>
        <end position="25"/>
    </location>
</feature>
<name>VL2_HPV65</name>
<reference key="1">
    <citation type="journal article" date="1993" name="Virology">
        <title>Two novel types of human papillomavirus, HPV 63 and HPV 65: comparisons of their clinical and histological features and DNA sequences to other HPV types.</title>
        <authorList>
            <person name="Egawa K."/>
            <person name="Delius H."/>
            <person name="Matsukura T."/>
            <person name="Kawashima M."/>
            <person name="de Villiers E.M."/>
        </authorList>
    </citation>
    <scope>NUCLEOTIDE SEQUENCE [GENOMIC DNA]</scope>
</reference>
<dbReference type="EMBL" id="X70829">
    <property type="protein sequence ID" value="CAA50176.1"/>
    <property type="molecule type" value="Genomic_DNA"/>
</dbReference>
<dbReference type="Proteomes" id="UP000007672">
    <property type="component" value="Genome"/>
</dbReference>
<dbReference type="GO" id="GO:0043657">
    <property type="term" value="C:host cell"/>
    <property type="evidence" value="ECO:0007669"/>
    <property type="project" value="GOC"/>
</dbReference>
<dbReference type="GO" id="GO:0044174">
    <property type="term" value="C:host cell endosome"/>
    <property type="evidence" value="ECO:0007669"/>
    <property type="project" value="UniProtKB-KW"/>
</dbReference>
<dbReference type="GO" id="GO:0044177">
    <property type="term" value="C:host cell Golgi apparatus"/>
    <property type="evidence" value="ECO:0007669"/>
    <property type="project" value="UniProtKB-SubCell"/>
</dbReference>
<dbReference type="GO" id="GO:0042025">
    <property type="term" value="C:host cell nucleus"/>
    <property type="evidence" value="ECO:0007669"/>
    <property type="project" value="UniProtKB-SubCell"/>
</dbReference>
<dbReference type="GO" id="GO:0019028">
    <property type="term" value="C:viral capsid"/>
    <property type="evidence" value="ECO:0007669"/>
    <property type="project" value="UniProtKB-UniRule"/>
</dbReference>
<dbReference type="GO" id="GO:0003677">
    <property type="term" value="F:DNA binding"/>
    <property type="evidence" value="ECO:0007669"/>
    <property type="project" value="UniProtKB-UniRule"/>
</dbReference>
<dbReference type="GO" id="GO:0005198">
    <property type="term" value="F:structural molecule activity"/>
    <property type="evidence" value="ECO:0007669"/>
    <property type="project" value="UniProtKB-UniRule"/>
</dbReference>
<dbReference type="GO" id="GO:0075521">
    <property type="term" value="P:microtubule-dependent intracellular transport of viral material towards nucleus"/>
    <property type="evidence" value="ECO:0007669"/>
    <property type="project" value="UniProtKB-UniRule"/>
</dbReference>
<dbReference type="GO" id="GO:0046718">
    <property type="term" value="P:symbiont entry into host cell"/>
    <property type="evidence" value="ECO:0007669"/>
    <property type="project" value="UniProtKB-KW"/>
</dbReference>
<dbReference type="GO" id="GO:0075732">
    <property type="term" value="P:viral penetration into host nucleus"/>
    <property type="evidence" value="ECO:0007669"/>
    <property type="project" value="UniProtKB-KW"/>
</dbReference>
<dbReference type="HAMAP" id="MF_04003">
    <property type="entry name" value="PPV_L2"/>
    <property type="match status" value="1"/>
</dbReference>
<dbReference type="InterPro" id="IPR000784">
    <property type="entry name" value="Late_L2"/>
</dbReference>
<dbReference type="Pfam" id="PF00513">
    <property type="entry name" value="Late_protein_L2"/>
    <property type="match status" value="1"/>
</dbReference>
<gene>
    <name evidence="1" type="primary">L2</name>
</gene>
<proteinExistence type="inferred from homology"/>
<accession>Q07875</accession>
<keyword id="KW-0167">Capsid protein</keyword>
<keyword id="KW-1176">Cytoplasmic inwards viral transport</keyword>
<keyword id="KW-1015">Disulfide bond</keyword>
<keyword id="KW-0238">DNA-binding</keyword>
<keyword id="KW-1039">Host endosome</keyword>
<keyword id="KW-1040">Host Golgi apparatus</keyword>
<keyword id="KW-1048">Host nucleus</keyword>
<keyword id="KW-0945">Host-virus interaction</keyword>
<keyword id="KW-0426">Late protein</keyword>
<keyword id="KW-1177">Microtubular inwards viral transport</keyword>
<keyword id="KW-0597">Phosphoprotein</keyword>
<keyword id="KW-1163">Viral penetration into host nucleus</keyword>
<keyword id="KW-0946">Virion</keyword>
<keyword id="KW-1160">Virus entry into host cell</keyword>
<sequence length="518" mass="55935">MQASRRTKRDSIPNLYAKCQLSGNCLPDVKNKVEADTLADRLLRWLGSVIYLGGLGIGTGRGSGGSSGYNPLGAPSRVTPSGTVIRPTVPVEGLGPSEIIPVDVVNPGSSSVVPLEDLTVPEVTIDSGEVGGGGLHPSEIDVVTSSDPISDVTGTSSHPTIISGEDNAIAVLDVSPTEPPTKRIALGTRGATSTPHISVISGTTEFGQSSDLNVFVNATFSGDSIGYTEEIPLEELNTIQQFEIETPPKTSTPRETIGRALERARDLYNRRVQQIATRNPAMLGQPSRAIVFGFENPAFDADITQVFERDLEQVAAAPDADFADIVRIGRPRFSQTDTGQIRISRLGRRGTIKTRSGLQIGQAVHFYYDLSTIDTADAIELSTLGQHSGEQSIVDAMIESSFVDPFETPDPTYTEEQQLLDPLTEDFSNSHLVLTSSRRGSSFSIPTIPPGLGLRIYVDDVGSDLFVSYPETRVIPAGGLPTEPFTPLEPPFFSEFYSSDFVYRPSLYRKKRKRSDIF</sequence>